<feature type="chain" id="PRO_0000169385" description="Protein YqgC">
    <location>
        <begin position="1"/>
        <end position="71"/>
    </location>
</feature>
<sequence length="71" mass="8114">MGITSAGMQSRDAECGERIFTRTVRQVKQQTTVHYFVSPPRPPVKTNPQAKTLISTRLEVATRKKRRVLFI</sequence>
<comment type="induction">
    <text evidence="1">Transcription is increased specifically in response to 2,4,6-trinitrotoluene (TNT) and its indicator compounds 1,3-DNB, 2,4-DNT, and 2,6-DNT.</text>
</comment>
<comment type="biotechnology">
    <text evidence="1">Has been used to construct a 2,4,6-trinitrotoluene (TNT) biosensor strain.</text>
</comment>
<keyword id="KW-1185">Reference proteome</keyword>
<reference key="1">
    <citation type="journal article" date="1997" name="Science">
        <title>The complete genome sequence of Escherichia coli K-12.</title>
        <authorList>
            <person name="Blattner F.R."/>
            <person name="Plunkett G. III"/>
            <person name="Bloch C.A."/>
            <person name="Perna N.T."/>
            <person name="Burland V."/>
            <person name="Riley M."/>
            <person name="Collado-Vides J."/>
            <person name="Glasner J.D."/>
            <person name="Rode C.K."/>
            <person name="Mayhew G.F."/>
            <person name="Gregor J."/>
            <person name="Davis N.W."/>
            <person name="Kirkpatrick H.A."/>
            <person name="Goeden M.A."/>
            <person name="Rose D.J."/>
            <person name="Mau B."/>
            <person name="Shao Y."/>
        </authorList>
    </citation>
    <scope>NUCLEOTIDE SEQUENCE [LARGE SCALE GENOMIC DNA]</scope>
    <source>
        <strain>K12 / MG1655 / ATCC 47076</strain>
    </source>
</reference>
<reference key="2">
    <citation type="journal article" date="2006" name="Mol. Syst. Biol.">
        <title>Highly accurate genome sequences of Escherichia coli K-12 strains MG1655 and W3110.</title>
        <authorList>
            <person name="Hayashi K."/>
            <person name="Morooka N."/>
            <person name="Yamamoto Y."/>
            <person name="Fujita K."/>
            <person name="Isono K."/>
            <person name="Choi S."/>
            <person name="Ohtsubo E."/>
            <person name="Baba T."/>
            <person name="Wanner B.L."/>
            <person name="Mori H."/>
            <person name="Horiuchi T."/>
        </authorList>
    </citation>
    <scope>NUCLEOTIDE SEQUENCE [LARGE SCALE GENOMIC DNA]</scope>
    <source>
        <strain>K12 / W3110 / ATCC 27325 / DSM 5911</strain>
    </source>
</reference>
<reference key="3">
    <citation type="journal article" date="2015" name="Cell Biochem. Biophys.">
        <title>Construction of 2,4,6-trinitrotoluene biosensors with novel sensing elements from Escherichia coli K-12 MG1655.</title>
        <authorList>
            <person name="Tan J."/>
            <person name="Kan N."/>
            <person name="Wang W."/>
            <person name="Ling J."/>
            <person name="Qu G."/>
            <person name="Jin J."/>
            <person name="Shao Y."/>
            <person name="Liu G."/>
            <person name="Chen H."/>
        </authorList>
    </citation>
    <scope>INDUCTION BY 2,4,6-TRINITROTOLUENE</scope>
    <scope>BIOTECHNOLOGY</scope>
    <source>
        <strain>K12 / MG1655 / ATCC 47076</strain>
    </source>
</reference>
<name>YQGC_ECOLI</name>
<evidence type="ECO:0000269" key="1">
    <source>
    </source>
</evidence>
<dbReference type="EMBL" id="U28377">
    <property type="protein sequence ID" value="AAA69107.1"/>
    <property type="molecule type" value="Genomic_DNA"/>
</dbReference>
<dbReference type="EMBL" id="U00096">
    <property type="protein sequence ID" value="AAC75977.1"/>
    <property type="molecule type" value="Genomic_DNA"/>
</dbReference>
<dbReference type="EMBL" id="AP009048">
    <property type="protein sequence ID" value="BAE77003.1"/>
    <property type="molecule type" value="Genomic_DNA"/>
</dbReference>
<dbReference type="PIR" id="C65079">
    <property type="entry name" value="C65079"/>
</dbReference>
<dbReference type="RefSeq" id="NP_417415.1">
    <property type="nucleotide sequence ID" value="NC_000913.3"/>
</dbReference>
<dbReference type="BioGRID" id="4262349">
    <property type="interactions" value="25"/>
</dbReference>
<dbReference type="FunCoup" id="P64570">
    <property type="interactions" value="54"/>
</dbReference>
<dbReference type="IntAct" id="P64570">
    <property type="interactions" value="4"/>
</dbReference>
<dbReference type="STRING" id="511145.b2940"/>
<dbReference type="PaxDb" id="511145-b2940"/>
<dbReference type="EnsemblBacteria" id="AAC75977">
    <property type="protein sequence ID" value="AAC75977"/>
    <property type="gene ID" value="b2940"/>
</dbReference>
<dbReference type="GeneID" id="945052"/>
<dbReference type="KEGG" id="ecj:JW2907"/>
<dbReference type="KEGG" id="eco:b2940"/>
<dbReference type="KEGG" id="ecoc:C3026_16095"/>
<dbReference type="PATRIC" id="fig|83333.103.peg.3835"/>
<dbReference type="EchoBASE" id="EB2957"/>
<dbReference type="eggNOG" id="ENOG502ZIDX">
    <property type="taxonomic scope" value="Bacteria"/>
</dbReference>
<dbReference type="HOGENOM" id="CLU_202419_0_0_6"/>
<dbReference type="InParanoid" id="P64570"/>
<dbReference type="OrthoDB" id="6630788at2"/>
<dbReference type="PhylomeDB" id="P64570"/>
<dbReference type="BioCyc" id="EcoCyc:G7522-MONOMER"/>
<dbReference type="PRO" id="PR:P64570"/>
<dbReference type="Proteomes" id="UP000000625">
    <property type="component" value="Chromosome"/>
</dbReference>
<dbReference type="InterPro" id="IPR020102">
    <property type="entry name" value="YqgC-like"/>
</dbReference>
<dbReference type="Pfam" id="PF17430">
    <property type="entry name" value="YqgC"/>
    <property type="match status" value="1"/>
</dbReference>
<organism>
    <name type="scientific">Escherichia coli (strain K12)</name>
    <dbReference type="NCBI Taxonomy" id="83333"/>
    <lineage>
        <taxon>Bacteria</taxon>
        <taxon>Pseudomonadati</taxon>
        <taxon>Pseudomonadota</taxon>
        <taxon>Gammaproteobacteria</taxon>
        <taxon>Enterobacterales</taxon>
        <taxon>Enterobacteriaceae</taxon>
        <taxon>Escherichia</taxon>
    </lineage>
</organism>
<accession>P64570</accession>
<accession>P46878</accession>
<accession>Q2M9Q3</accession>
<protein>
    <recommendedName>
        <fullName>Protein YqgC</fullName>
    </recommendedName>
</protein>
<proteinExistence type="evidence at protein level"/>
<gene>
    <name type="primary">yqgC</name>
    <name type="ordered locus">b2940</name>
    <name type="ordered locus">JW2907</name>
</gene>